<protein>
    <recommendedName>
        <fullName>Protein vein</fullName>
    </recommendedName>
    <alternativeName>
        <fullName>Epidermal growth factor-like protein</fullName>
    </alternativeName>
    <alternativeName>
        <fullName>Protein defective dorsal discs</fullName>
    </alternativeName>
</protein>
<sequence length="623" mass="71698">MYAQHLRKWSLKTKKQLMPLILLIISYMLLLNTCVLSSSATTQQQQQQQQQQQHLPRLWEGSAEESSYYIPLSSDNGSGSSESSAESGSSSSRSSSNNIDNNILSRLLSLNSNSLSSRSNVKLKPATVFDAGSSTPAQQEQHVAAVPEQQQQQQQQQQSMQKVPNTLINSQIYNLLYNGMPSEAASSKMRRHIQPSQLPHQPESRAQLPSNYSSRPAVRSYLIESYEMPESMLEDRSPEQAARSRRDGSNTNGSRQQQRTGHRQQLQQDKRDHRRQRQDQQKEQRQQQQQRQHKSGNKHQQQQQQRRKHQRKHQRYNRYCSARDPAQLAFAAPTVFQGVFKSMSADRRVNFSATMKVEKVYKQQHDLQLPTLVRLQFALSNSSGECDIYRERLMPRGMLRSGNDLQQASDISYMMFVQQTNPGNFTILGQPMRVTHLVVEAVETAVSENYTQNAEVTKIFSKPSKAIIKHGKKLRIVCEVSGQPPPKVTWFKDEKSINRKRNIYQFKHHKRRSELIVRSFNSSSDAGRYECRAKNKASKAIAKRRIMIKASPVHFPTDRSASGIPCNFDYCFHNGTCRMIPDINEVYCRCPTEYFGNRCENKWPDSRYFVAIYGQIHTLNNDY</sequence>
<gene>
    <name type="primary">vn</name>
    <name type="synonym">ddd</name>
    <name type="ORF">CG10491</name>
</gene>
<keyword id="KW-0025">Alternative splicing</keyword>
<keyword id="KW-0217">Developmental protein</keyword>
<keyword id="KW-1015">Disulfide bond</keyword>
<keyword id="KW-0245">EGF-like domain</keyword>
<keyword id="KW-0325">Glycoprotein</keyword>
<keyword id="KW-0339">Growth factor</keyword>
<keyword id="KW-0393">Immunoglobulin domain</keyword>
<keyword id="KW-1185">Reference proteome</keyword>
<keyword id="KW-0964">Secreted</keyword>
<keyword id="KW-0732">Signal</keyword>
<organism>
    <name type="scientific">Drosophila melanogaster</name>
    <name type="common">Fruit fly</name>
    <dbReference type="NCBI Taxonomy" id="7227"/>
    <lineage>
        <taxon>Eukaryota</taxon>
        <taxon>Metazoa</taxon>
        <taxon>Ecdysozoa</taxon>
        <taxon>Arthropoda</taxon>
        <taxon>Hexapoda</taxon>
        <taxon>Insecta</taxon>
        <taxon>Pterygota</taxon>
        <taxon>Neoptera</taxon>
        <taxon>Endopterygota</taxon>
        <taxon>Diptera</taxon>
        <taxon>Brachycera</taxon>
        <taxon>Muscomorpha</taxon>
        <taxon>Ephydroidea</taxon>
        <taxon>Drosophilidae</taxon>
        <taxon>Drosophila</taxon>
        <taxon>Sophophora</taxon>
    </lineage>
</organism>
<feature type="signal peptide" evidence="2">
    <location>
        <begin position="1"/>
        <end position="40"/>
    </location>
</feature>
<feature type="chain" id="PRO_0000007774" description="Protein vein">
    <location>
        <begin position="41"/>
        <end position="623"/>
    </location>
</feature>
<feature type="domain" description="Ig-like C2-type">
    <location>
        <begin position="457"/>
        <end position="542"/>
    </location>
</feature>
<feature type="domain" description="EGF-like" evidence="3">
    <location>
        <begin position="561"/>
        <end position="599"/>
    </location>
</feature>
<feature type="region of interest" description="Disordered" evidence="4">
    <location>
        <begin position="70"/>
        <end position="98"/>
    </location>
</feature>
<feature type="region of interest" description="Disordered" evidence="4">
    <location>
        <begin position="130"/>
        <end position="162"/>
    </location>
</feature>
<feature type="region of interest" description="Disordered" evidence="4">
    <location>
        <begin position="184"/>
        <end position="214"/>
    </location>
</feature>
<feature type="region of interest" description="Disordered" evidence="4">
    <location>
        <begin position="229"/>
        <end position="317"/>
    </location>
</feature>
<feature type="compositionally biased region" description="Low complexity" evidence="4">
    <location>
        <begin position="72"/>
        <end position="98"/>
    </location>
</feature>
<feature type="compositionally biased region" description="Low complexity" evidence="4">
    <location>
        <begin position="136"/>
        <end position="158"/>
    </location>
</feature>
<feature type="compositionally biased region" description="Basic and acidic residues" evidence="4">
    <location>
        <begin position="233"/>
        <end position="248"/>
    </location>
</feature>
<feature type="compositionally biased region" description="Low complexity" evidence="4">
    <location>
        <begin position="255"/>
        <end position="267"/>
    </location>
</feature>
<feature type="compositionally biased region" description="Basic residues" evidence="4">
    <location>
        <begin position="305"/>
        <end position="316"/>
    </location>
</feature>
<feature type="glycosylation site" description="N-linked (GlcNAc...) asparagine" evidence="2">
    <location>
        <position position="76"/>
    </location>
</feature>
<feature type="glycosylation site" description="N-linked (GlcNAc...) asparagine" evidence="2">
    <location>
        <position position="211"/>
    </location>
</feature>
<feature type="glycosylation site" description="N-linked (GlcNAc...) asparagine" evidence="2">
    <location>
        <position position="252"/>
    </location>
</feature>
<feature type="glycosylation site" description="N-linked (GlcNAc...) asparagine" evidence="2">
    <location>
        <position position="350"/>
    </location>
</feature>
<feature type="glycosylation site" description="N-linked (GlcNAc...) asparagine" evidence="2">
    <location>
        <position position="381"/>
    </location>
</feature>
<feature type="glycosylation site" description="N-linked (GlcNAc...) asparagine" evidence="2">
    <location>
        <position position="424"/>
    </location>
</feature>
<feature type="glycosylation site" description="N-linked (GlcNAc...) asparagine" evidence="2">
    <location>
        <position position="449"/>
    </location>
</feature>
<feature type="glycosylation site" description="N-linked (GlcNAc...) asparagine" evidence="2">
    <location>
        <position position="521"/>
    </location>
</feature>
<feature type="glycosylation site" description="N-linked (GlcNAc...) asparagine" evidence="2">
    <location>
        <position position="574"/>
    </location>
</feature>
<feature type="disulfide bond" evidence="1">
    <location>
        <begin position="478"/>
        <end position="531"/>
    </location>
</feature>
<feature type="disulfide bond" evidence="1">
    <location>
        <begin position="566"/>
        <end position="577"/>
    </location>
</feature>
<feature type="disulfide bond" evidence="1">
    <location>
        <begin position="571"/>
        <end position="588"/>
    </location>
</feature>
<feature type="disulfide bond" evidence="1">
    <location>
        <begin position="590"/>
        <end position="599"/>
    </location>
</feature>
<feature type="splice variant" id="VSP_001419" description="In isoform 2." evidence="5">
    <original>FVAIYGQIHTLNNDY</original>
    <variation>SSPESCKNYQGGYY</variation>
    <location>
        <begin position="609"/>
        <end position="623"/>
    </location>
</feature>
<feature type="sequence conflict" description="In Ref. 1; AAC47293." evidence="6" ref="1">
    <location>
        <position position="149"/>
    </location>
</feature>
<feature type="sequence conflict" description="In Ref. 1; AAC47293." evidence="6" ref="1">
    <original>S</original>
    <variation>T</variation>
    <location>
        <position position="220"/>
    </location>
</feature>
<feature type="sequence conflict" description="In Ref. 1; AAC47293." evidence="6" ref="1">
    <original>E</original>
    <variation>D</variation>
    <location>
        <position position="494"/>
    </location>
</feature>
<dbReference type="EMBL" id="U67935">
    <property type="protein sequence ID" value="AAC47293.1"/>
    <property type="molecule type" value="mRNA"/>
</dbReference>
<dbReference type="EMBL" id="AE014296">
    <property type="protein sequence ID" value="AAF50739.2"/>
    <property type="molecule type" value="Genomic_DNA"/>
</dbReference>
<dbReference type="RefSeq" id="NP_523942.2">
    <molecule id="Q94918-1"/>
    <property type="nucleotide sequence ID" value="NM_079218.3"/>
</dbReference>
<dbReference type="SMR" id="Q94918"/>
<dbReference type="BioGRID" id="64117">
    <property type="interactions" value="35"/>
</dbReference>
<dbReference type="FunCoup" id="Q94918">
    <property type="interactions" value="189"/>
</dbReference>
<dbReference type="IntAct" id="Q94918">
    <property type="interactions" value="3"/>
</dbReference>
<dbReference type="STRING" id="7227.FBpp0076790"/>
<dbReference type="GlyCosmos" id="Q94918">
    <property type="glycosylation" value="9 sites, No reported glycans"/>
</dbReference>
<dbReference type="GlyGen" id="Q94918">
    <property type="glycosylation" value="9 sites"/>
</dbReference>
<dbReference type="PaxDb" id="7227-FBpp0076790"/>
<dbReference type="EnsemblMetazoa" id="FBtr0077082">
    <molecule id="Q94918-1"/>
    <property type="protein sequence ID" value="FBpp0076790"/>
    <property type="gene ID" value="FBgn0003984"/>
</dbReference>
<dbReference type="GeneID" id="38657"/>
<dbReference type="KEGG" id="dme:Dmel_CG10491"/>
<dbReference type="AGR" id="FB:FBgn0003984"/>
<dbReference type="CTD" id="38657"/>
<dbReference type="FlyBase" id="FBgn0003984">
    <property type="gene designation" value="vn"/>
</dbReference>
<dbReference type="VEuPathDB" id="VectorBase:FBgn0003984"/>
<dbReference type="eggNOG" id="ENOG502QRNM">
    <property type="taxonomic scope" value="Eukaryota"/>
</dbReference>
<dbReference type="HOGENOM" id="CLU_034587_0_0_1"/>
<dbReference type="InParanoid" id="Q94918"/>
<dbReference type="OMA" id="ENICFHG"/>
<dbReference type="OrthoDB" id="6133584at2759"/>
<dbReference type="PhylomeDB" id="Q94918"/>
<dbReference type="Reactome" id="R-DME-1227986">
    <property type="pathway name" value="Signaling by ERBB2"/>
</dbReference>
<dbReference type="Reactome" id="R-DME-1236394">
    <property type="pathway name" value="Signaling by ERBB4"/>
</dbReference>
<dbReference type="Reactome" id="R-DME-1250196">
    <property type="pathway name" value="SHC1 events in ERBB2 signaling"/>
</dbReference>
<dbReference type="Reactome" id="R-DME-1250342">
    <property type="pathway name" value="PI3K events in ERBB4 signaling"/>
</dbReference>
<dbReference type="Reactome" id="R-DME-1250347">
    <property type="pathway name" value="SHC1 events in ERBB4 signaling"/>
</dbReference>
<dbReference type="Reactome" id="R-DME-1257604">
    <property type="pathway name" value="PIP3 activates AKT signaling"/>
</dbReference>
<dbReference type="Reactome" id="R-DME-1358803">
    <property type="pathway name" value="Downregulation of ERBB2:ERBB3 signaling"/>
</dbReference>
<dbReference type="Reactome" id="R-DME-1963640">
    <property type="pathway name" value="GRB2 events in ERBB2 signaling"/>
</dbReference>
<dbReference type="Reactome" id="R-DME-1963642">
    <property type="pathway name" value="PI3K events in ERBB2 signaling"/>
</dbReference>
<dbReference type="Reactome" id="R-DME-5673001">
    <property type="pathway name" value="RAF/MAP kinase cascade"/>
</dbReference>
<dbReference type="Reactome" id="R-DME-6785631">
    <property type="pathway name" value="ERBB2 Regulates Cell Motility"/>
</dbReference>
<dbReference type="Reactome" id="R-DME-6811558">
    <property type="pathway name" value="PI5P, PP2A and IER3 Regulate PI3K/AKT Signaling"/>
</dbReference>
<dbReference type="Reactome" id="R-DME-8863795">
    <property type="pathway name" value="Downregulation of ERBB2 signaling"/>
</dbReference>
<dbReference type="SignaLink" id="Q94918"/>
<dbReference type="BioGRID-ORCS" id="38657">
    <property type="hits" value="0 hits in 1 CRISPR screen"/>
</dbReference>
<dbReference type="ChiTaRS" id="vn">
    <property type="organism name" value="fly"/>
</dbReference>
<dbReference type="GenomeRNAi" id="38657"/>
<dbReference type="PRO" id="PR:Q94918"/>
<dbReference type="Proteomes" id="UP000000803">
    <property type="component" value="Chromosome 3L"/>
</dbReference>
<dbReference type="Bgee" id="FBgn0003984">
    <property type="expression patterns" value="Expressed in compound eye cone cell in insect head and 156 other cell types or tissues"/>
</dbReference>
<dbReference type="ExpressionAtlas" id="Q94918">
    <property type="expression patterns" value="baseline and differential"/>
</dbReference>
<dbReference type="GO" id="GO:0005576">
    <property type="term" value="C:extracellular region"/>
    <property type="evidence" value="ECO:0000303"/>
    <property type="project" value="UniProtKB"/>
</dbReference>
<dbReference type="GO" id="GO:0005615">
    <property type="term" value="C:extracellular space"/>
    <property type="evidence" value="ECO:0000314"/>
    <property type="project" value="FlyBase"/>
</dbReference>
<dbReference type="GO" id="GO:0005154">
    <property type="term" value="F:epidermal growth factor receptor binding"/>
    <property type="evidence" value="ECO:0000314"/>
    <property type="project" value="FlyBase"/>
</dbReference>
<dbReference type="GO" id="GO:0008083">
    <property type="term" value="F:growth factor activity"/>
    <property type="evidence" value="ECO:0007669"/>
    <property type="project" value="UniProtKB-KW"/>
</dbReference>
<dbReference type="GO" id="GO:0008201">
    <property type="term" value="F:heparin binding"/>
    <property type="evidence" value="ECO:0000314"/>
    <property type="project" value="FlyBase"/>
</dbReference>
<dbReference type="GO" id="GO:0048018">
    <property type="term" value="F:receptor ligand activity"/>
    <property type="evidence" value="ECO:0000314"/>
    <property type="project" value="FlyBase"/>
</dbReference>
<dbReference type="GO" id="GO:0005102">
    <property type="term" value="F:signaling receptor binding"/>
    <property type="evidence" value="ECO:0000318"/>
    <property type="project" value="GO_Central"/>
</dbReference>
<dbReference type="GO" id="GO:0007420">
    <property type="term" value="P:brain development"/>
    <property type="evidence" value="ECO:0000315"/>
    <property type="project" value="FlyBase"/>
</dbReference>
<dbReference type="GO" id="GO:0030031">
    <property type="term" value="P:cell projection assembly"/>
    <property type="evidence" value="ECO:0000315"/>
    <property type="project" value="FlyBase"/>
</dbReference>
<dbReference type="GO" id="GO:0007173">
    <property type="term" value="P:epidermal growth factor receptor signaling pathway"/>
    <property type="evidence" value="ECO:0000314"/>
    <property type="project" value="FlyBase"/>
</dbReference>
<dbReference type="GO" id="GO:0038127">
    <property type="term" value="P:ERBB signaling pathway"/>
    <property type="evidence" value="ECO:0000318"/>
    <property type="project" value="GO_Central"/>
</dbReference>
<dbReference type="GO" id="GO:0007482">
    <property type="term" value="P:haltere development"/>
    <property type="evidence" value="ECO:0000315"/>
    <property type="project" value="FlyBase"/>
</dbReference>
<dbReference type="GO" id="GO:0007476">
    <property type="term" value="P:imaginal disc-derived wing morphogenesis"/>
    <property type="evidence" value="ECO:0000315"/>
    <property type="project" value="FlyBase"/>
</dbReference>
<dbReference type="GO" id="GO:0008586">
    <property type="term" value="P:imaginal disc-derived wing vein morphogenesis"/>
    <property type="evidence" value="ECO:0000315"/>
    <property type="project" value="FlyBase"/>
</dbReference>
<dbReference type="GO" id="GO:0035556">
    <property type="term" value="P:intracellular signal transduction"/>
    <property type="evidence" value="ECO:0000318"/>
    <property type="project" value="GO_Central"/>
</dbReference>
<dbReference type="GO" id="GO:0007479">
    <property type="term" value="P:leg disc proximal/distal pattern formation"/>
    <property type="evidence" value="ECO:0000270"/>
    <property type="project" value="FlyBase"/>
</dbReference>
<dbReference type="GO" id="GO:0007494">
    <property type="term" value="P:midgut development"/>
    <property type="evidence" value="ECO:0000315"/>
    <property type="project" value="FlyBase"/>
</dbReference>
<dbReference type="GO" id="GO:0035310">
    <property type="term" value="P:notum cell fate specification"/>
    <property type="evidence" value="ECO:0000315"/>
    <property type="project" value="FlyBase"/>
</dbReference>
<dbReference type="GO" id="GO:0007477">
    <property type="term" value="P:notum development"/>
    <property type="evidence" value="ECO:0000315"/>
    <property type="project" value="FlyBase"/>
</dbReference>
<dbReference type="GO" id="GO:0008355">
    <property type="term" value="P:olfactory learning"/>
    <property type="evidence" value="ECO:0000315"/>
    <property type="project" value="FlyBase"/>
</dbReference>
<dbReference type="GO" id="GO:0007424">
    <property type="term" value="P:open tracheal system development"/>
    <property type="evidence" value="ECO:0000315"/>
    <property type="project" value="FlyBase"/>
</dbReference>
<dbReference type="GO" id="GO:0007422">
    <property type="term" value="P:peripheral nervous system development"/>
    <property type="evidence" value="ECO:0000315"/>
    <property type="project" value="FlyBase"/>
</dbReference>
<dbReference type="GO" id="GO:1903688">
    <property type="term" value="P:positive regulation of border follicle cell migration"/>
    <property type="evidence" value="ECO:0000315"/>
    <property type="project" value="FlyBase"/>
</dbReference>
<dbReference type="GO" id="GO:0008284">
    <property type="term" value="P:positive regulation of cell population proliferation"/>
    <property type="evidence" value="ECO:0000315"/>
    <property type="project" value="FlyBase"/>
</dbReference>
<dbReference type="GO" id="GO:0070374">
    <property type="term" value="P:positive regulation of ERK1 and ERK2 cascade"/>
    <property type="evidence" value="ECO:0000314"/>
    <property type="project" value="FlyBase"/>
</dbReference>
<dbReference type="GO" id="GO:0045465">
    <property type="term" value="P:R8 cell differentiation"/>
    <property type="evidence" value="ECO:0000315"/>
    <property type="project" value="FlyBase"/>
</dbReference>
<dbReference type="GO" id="GO:2000736">
    <property type="term" value="P:regulation of stem cell differentiation"/>
    <property type="evidence" value="ECO:0000315"/>
    <property type="project" value="FlyBase"/>
</dbReference>
<dbReference type="CDD" id="cd00054">
    <property type="entry name" value="EGF_CA"/>
    <property type="match status" value="1"/>
</dbReference>
<dbReference type="CDD" id="cd00096">
    <property type="entry name" value="Ig"/>
    <property type="match status" value="1"/>
</dbReference>
<dbReference type="FunFam" id="2.60.40.10:FF:000032">
    <property type="entry name" value="palladin isoform X1"/>
    <property type="match status" value="1"/>
</dbReference>
<dbReference type="Gene3D" id="2.60.40.10">
    <property type="entry name" value="Immunoglobulins"/>
    <property type="match status" value="1"/>
</dbReference>
<dbReference type="Gene3D" id="2.10.25.10">
    <property type="entry name" value="Laminin"/>
    <property type="match status" value="1"/>
</dbReference>
<dbReference type="InterPro" id="IPR000742">
    <property type="entry name" value="EGF-like_dom"/>
</dbReference>
<dbReference type="InterPro" id="IPR007110">
    <property type="entry name" value="Ig-like_dom"/>
</dbReference>
<dbReference type="InterPro" id="IPR036179">
    <property type="entry name" value="Ig-like_dom_sf"/>
</dbReference>
<dbReference type="InterPro" id="IPR013783">
    <property type="entry name" value="Ig-like_fold"/>
</dbReference>
<dbReference type="InterPro" id="IPR013098">
    <property type="entry name" value="Ig_I-set"/>
</dbReference>
<dbReference type="InterPro" id="IPR003598">
    <property type="entry name" value="Ig_sub2"/>
</dbReference>
<dbReference type="PANTHER" id="PTHR47633">
    <property type="entry name" value="IMMUNOGLOBULIN"/>
    <property type="match status" value="1"/>
</dbReference>
<dbReference type="PANTHER" id="PTHR47633:SF4">
    <property type="entry name" value="MYOPALLADIN ISOFORM X1"/>
    <property type="match status" value="1"/>
</dbReference>
<dbReference type="Pfam" id="PF07679">
    <property type="entry name" value="I-set"/>
    <property type="match status" value="1"/>
</dbReference>
<dbReference type="Pfam" id="PF24700">
    <property type="entry name" value="Vein_beta-barrel"/>
    <property type="match status" value="1"/>
</dbReference>
<dbReference type="SMART" id="SM00408">
    <property type="entry name" value="IGc2"/>
    <property type="match status" value="1"/>
</dbReference>
<dbReference type="SUPFAM" id="SSF57196">
    <property type="entry name" value="EGF/Laminin"/>
    <property type="match status" value="1"/>
</dbReference>
<dbReference type="SUPFAM" id="SSF48726">
    <property type="entry name" value="Immunoglobulin"/>
    <property type="match status" value="1"/>
</dbReference>
<dbReference type="PROSITE" id="PS00022">
    <property type="entry name" value="EGF_1"/>
    <property type="match status" value="1"/>
</dbReference>
<dbReference type="PROSITE" id="PS50026">
    <property type="entry name" value="EGF_3"/>
    <property type="match status" value="1"/>
</dbReference>
<dbReference type="PROSITE" id="PS50835">
    <property type="entry name" value="IG_LIKE"/>
    <property type="match status" value="1"/>
</dbReference>
<evidence type="ECO:0000250" key="1"/>
<evidence type="ECO:0000255" key="2"/>
<evidence type="ECO:0000255" key="3">
    <source>
        <dbReference type="PROSITE-ProRule" id="PRU00076"/>
    </source>
</evidence>
<evidence type="ECO:0000256" key="4">
    <source>
        <dbReference type="SAM" id="MobiDB-lite"/>
    </source>
</evidence>
<evidence type="ECO:0000303" key="5">
    <source>
    </source>
</evidence>
<evidence type="ECO:0000305" key="6"/>
<comment type="function">
    <text>Ligand for the EGF receptor. Seems to play a role in the global proliferation of wing disc cells and the larval patterning. Shows a strong synergistic genetic interaction with spi, suggesting a molecular interdependence. Required for the development of interveins cells.</text>
</comment>
<comment type="interaction">
    <interactant intactId="EBI-869384">
        <id>Q94918</id>
    </interactant>
    <interactant intactId="EBI-6895641">
        <id>A8JUV7</id>
        <label>boi</label>
    </interactant>
    <organismsDiffer>false</organismsDiffer>
    <experiments>3</experiments>
</comment>
<comment type="interaction">
    <interactant intactId="EBI-869384">
        <id>Q94918</id>
    </interactant>
    <interactant intactId="EBI-94134">
        <id>Q9VM64</id>
        <label>ihog</label>
    </interactant>
    <organismsDiffer>false</organismsDiffer>
    <experiments>2</experiments>
</comment>
<comment type="subcellular location">
    <subcellularLocation>
        <location>Secreted</location>
    </subcellularLocation>
</comment>
<comment type="alternative products">
    <event type="alternative splicing"/>
    <isoform>
        <id>Q94918-1</id>
        <name>1</name>
        <sequence type="displayed"/>
    </isoform>
    <isoform>
        <id>Q94918-2</id>
        <name>2</name>
        <sequence type="described" ref="VSP_001419"/>
    </isoform>
</comment>
<comment type="developmental stage">
    <text>Expressed in blastoderm embryos in two ventrolateral stripes that are brought to the midline as gastrulation proceeds. In the germ-band retraction stage, expression is seen in the CNS and epidermis. At late blastoderm, expression is localized in the anlagen of the amnioserosa. Expression in the head, cypeolabrum, maxillary and labial lobes, and around the stomodeum throughout embryo development. In late embryos, expression decays in all ectodermal cells and appears in the segmental muscles and the gut wall. In the larva, expression occurs in the dorsal metathoracic disc, the eye-antennal disc and the ventral thoracic disc. Found in the intervein in the pupa.</text>
</comment>
<proteinExistence type="evidence at protein level"/>
<reference key="1">
    <citation type="journal article" date="1996" name="Genes Dev.">
        <title>Vein is a novel component in the Drosophila epidermal growth factor receptor pathway with similarity to the neuregulins.</title>
        <authorList>
            <person name="Schnepp B.C."/>
            <person name="Grumbling G.B."/>
            <person name="Donaldson T.D."/>
            <person name="Simcox A.A."/>
        </authorList>
    </citation>
    <scope>NUCLEOTIDE SEQUENCE [MRNA] (ISOFORMS 1 AND 2)</scope>
    <source>
        <tissue>Embryo</tissue>
        <tissue>Imaginal disk</tissue>
    </source>
</reference>
<reference key="2">
    <citation type="journal article" date="2000" name="Science">
        <title>The genome sequence of Drosophila melanogaster.</title>
        <authorList>
            <person name="Adams M.D."/>
            <person name="Celniker S.E."/>
            <person name="Holt R.A."/>
            <person name="Evans C.A."/>
            <person name="Gocayne J.D."/>
            <person name="Amanatides P.G."/>
            <person name="Scherer S.E."/>
            <person name="Li P.W."/>
            <person name="Hoskins R.A."/>
            <person name="Galle R.F."/>
            <person name="George R.A."/>
            <person name="Lewis S.E."/>
            <person name="Richards S."/>
            <person name="Ashburner M."/>
            <person name="Henderson S.N."/>
            <person name="Sutton G.G."/>
            <person name="Wortman J.R."/>
            <person name="Yandell M.D."/>
            <person name="Zhang Q."/>
            <person name="Chen L.X."/>
            <person name="Brandon R.C."/>
            <person name="Rogers Y.-H.C."/>
            <person name="Blazej R.G."/>
            <person name="Champe M."/>
            <person name="Pfeiffer B.D."/>
            <person name="Wan K.H."/>
            <person name="Doyle C."/>
            <person name="Baxter E.G."/>
            <person name="Helt G."/>
            <person name="Nelson C.R."/>
            <person name="Miklos G.L.G."/>
            <person name="Abril J.F."/>
            <person name="Agbayani A."/>
            <person name="An H.-J."/>
            <person name="Andrews-Pfannkoch C."/>
            <person name="Baldwin D."/>
            <person name="Ballew R.M."/>
            <person name="Basu A."/>
            <person name="Baxendale J."/>
            <person name="Bayraktaroglu L."/>
            <person name="Beasley E.M."/>
            <person name="Beeson K.Y."/>
            <person name="Benos P.V."/>
            <person name="Berman B.P."/>
            <person name="Bhandari D."/>
            <person name="Bolshakov S."/>
            <person name="Borkova D."/>
            <person name="Botchan M.R."/>
            <person name="Bouck J."/>
            <person name="Brokstein P."/>
            <person name="Brottier P."/>
            <person name="Burtis K.C."/>
            <person name="Busam D.A."/>
            <person name="Butler H."/>
            <person name="Cadieu E."/>
            <person name="Center A."/>
            <person name="Chandra I."/>
            <person name="Cherry J.M."/>
            <person name="Cawley S."/>
            <person name="Dahlke C."/>
            <person name="Davenport L.B."/>
            <person name="Davies P."/>
            <person name="de Pablos B."/>
            <person name="Delcher A."/>
            <person name="Deng Z."/>
            <person name="Mays A.D."/>
            <person name="Dew I."/>
            <person name="Dietz S.M."/>
            <person name="Dodson K."/>
            <person name="Doup L.E."/>
            <person name="Downes M."/>
            <person name="Dugan-Rocha S."/>
            <person name="Dunkov B.C."/>
            <person name="Dunn P."/>
            <person name="Durbin K.J."/>
            <person name="Evangelista C.C."/>
            <person name="Ferraz C."/>
            <person name="Ferriera S."/>
            <person name="Fleischmann W."/>
            <person name="Fosler C."/>
            <person name="Gabrielian A.E."/>
            <person name="Garg N.S."/>
            <person name="Gelbart W.M."/>
            <person name="Glasser K."/>
            <person name="Glodek A."/>
            <person name="Gong F."/>
            <person name="Gorrell J.H."/>
            <person name="Gu Z."/>
            <person name="Guan P."/>
            <person name="Harris M."/>
            <person name="Harris N.L."/>
            <person name="Harvey D.A."/>
            <person name="Heiman T.J."/>
            <person name="Hernandez J.R."/>
            <person name="Houck J."/>
            <person name="Hostin D."/>
            <person name="Houston K.A."/>
            <person name="Howland T.J."/>
            <person name="Wei M.-H."/>
            <person name="Ibegwam C."/>
            <person name="Jalali M."/>
            <person name="Kalush F."/>
            <person name="Karpen G.H."/>
            <person name="Ke Z."/>
            <person name="Kennison J.A."/>
            <person name="Ketchum K.A."/>
            <person name="Kimmel B.E."/>
            <person name="Kodira C.D."/>
            <person name="Kraft C.L."/>
            <person name="Kravitz S."/>
            <person name="Kulp D."/>
            <person name="Lai Z."/>
            <person name="Lasko P."/>
            <person name="Lei Y."/>
            <person name="Levitsky A.A."/>
            <person name="Li J.H."/>
            <person name="Li Z."/>
            <person name="Liang Y."/>
            <person name="Lin X."/>
            <person name="Liu X."/>
            <person name="Mattei B."/>
            <person name="McIntosh T.C."/>
            <person name="McLeod M.P."/>
            <person name="McPherson D."/>
            <person name="Merkulov G."/>
            <person name="Milshina N.V."/>
            <person name="Mobarry C."/>
            <person name="Morris J."/>
            <person name="Moshrefi A."/>
            <person name="Mount S.M."/>
            <person name="Moy M."/>
            <person name="Murphy B."/>
            <person name="Murphy L."/>
            <person name="Muzny D.M."/>
            <person name="Nelson D.L."/>
            <person name="Nelson D.R."/>
            <person name="Nelson K.A."/>
            <person name="Nixon K."/>
            <person name="Nusskern D.R."/>
            <person name="Pacleb J.M."/>
            <person name="Palazzolo M."/>
            <person name="Pittman G.S."/>
            <person name="Pan S."/>
            <person name="Pollard J."/>
            <person name="Puri V."/>
            <person name="Reese M.G."/>
            <person name="Reinert K."/>
            <person name="Remington K."/>
            <person name="Saunders R.D.C."/>
            <person name="Scheeler F."/>
            <person name="Shen H."/>
            <person name="Shue B.C."/>
            <person name="Siden-Kiamos I."/>
            <person name="Simpson M."/>
            <person name="Skupski M.P."/>
            <person name="Smith T.J."/>
            <person name="Spier E."/>
            <person name="Spradling A.C."/>
            <person name="Stapleton M."/>
            <person name="Strong R."/>
            <person name="Sun E."/>
            <person name="Svirskas R."/>
            <person name="Tector C."/>
            <person name="Turner R."/>
            <person name="Venter E."/>
            <person name="Wang A.H."/>
            <person name="Wang X."/>
            <person name="Wang Z.-Y."/>
            <person name="Wassarman D.A."/>
            <person name="Weinstock G.M."/>
            <person name="Weissenbach J."/>
            <person name="Williams S.M."/>
            <person name="Woodage T."/>
            <person name="Worley K.C."/>
            <person name="Wu D."/>
            <person name="Yang S."/>
            <person name="Yao Q.A."/>
            <person name="Ye J."/>
            <person name="Yeh R.-F."/>
            <person name="Zaveri J.S."/>
            <person name="Zhan M."/>
            <person name="Zhang G."/>
            <person name="Zhao Q."/>
            <person name="Zheng L."/>
            <person name="Zheng X.H."/>
            <person name="Zhong F.N."/>
            <person name="Zhong W."/>
            <person name="Zhou X."/>
            <person name="Zhu S.C."/>
            <person name="Zhu X."/>
            <person name="Smith H.O."/>
            <person name="Gibbs R.A."/>
            <person name="Myers E.W."/>
            <person name="Rubin G.M."/>
            <person name="Venter J.C."/>
        </authorList>
    </citation>
    <scope>NUCLEOTIDE SEQUENCE [LARGE SCALE GENOMIC DNA]</scope>
    <source>
        <strain>Berkeley</strain>
    </source>
</reference>
<reference key="3">
    <citation type="journal article" date="2002" name="Genome Biol.">
        <title>Annotation of the Drosophila melanogaster euchromatic genome: a systematic review.</title>
        <authorList>
            <person name="Misra S."/>
            <person name="Crosby M.A."/>
            <person name="Mungall C.J."/>
            <person name="Matthews B.B."/>
            <person name="Campbell K.S."/>
            <person name="Hradecky P."/>
            <person name="Huang Y."/>
            <person name="Kaminker J.S."/>
            <person name="Millburn G.H."/>
            <person name="Prochnik S.E."/>
            <person name="Smith C.D."/>
            <person name="Tupy J.L."/>
            <person name="Whitfield E.J."/>
            <person name="Bayraktaroglu L."/>
            <person name="Berman B.P."/>
            <person name="Bettencourt B.R."/>
            <person name="Celniker S.E."/>
            <person name="de Grey A.D.N.J."/>
            <person name="Drysdale R.A."/>
            <person name="Harris N.L."/>
            <person name="Richter J."/>
            <person name="Russo S."/>
            <person name="Schroeder A.J."/>
            <person name="Shu S.Q."/>
            <person name="Stapleton M."/>
            <person name="Yamada C."/>
            <person name="Ashburner M."/>
            <person name="Gelbart W.M."/>
            <person name="Rubin G.M."/>
            <person name="Lewis S.E."/>
        </authorList>
    </citation>
    <scope>GENOME REANNOTATION</scope>
    <source>
        <strain>Berkeley</strain>
    </source>
</reference>
<name>VEIN_DROME</name>
<accession>Q94918</accession>
<accession>Q9VRQ3</accession>